<name>MTND_LEIBR</name>
<dbReference type="EC" id="1.13.11.54" evidence="1"/>
<dbReference type="EC" id="1.13.11.53" evidence="1"/>
<dbReference type="EMBL" id="FR798995">
    <property type="protein sequence ID" value="CBZ14592.1"/>
    <property type="molecule type" value="Genomic_DNA"/>
</dbReference>
<dbReference type="RefSeq" id="XP_003723064.1">
    <property type="nucleotide sequence ID" value="XM_003723016.1"/>
</dbReference>
<dbReference type="SMR" id="E9AIE8"/>
<dbReference type="FunCoup" id="E9AIE8">
    <property type="interactions" value="52"/>
</dbReference>
<dbReference type="STRING" id="5660.E9AIE8"/>
<dbReference type="GeneID" id="12983292"/>
<dbReference type="KEGG" id="lbz:LBRM_20_5150"/>
<dbReference type="VEuPathDB" id="TriTrypDB:LbrM.20.5150"/>
<dbReference type="InParanoid" id="E9AIE8"/>
<dbReference type="UniPathway" id="UPA00904">
    <property type="reaction ID" value="UER00878"/>
</dbReference>
<dbReference type="GO" id="GO:0005737">
    <property type="term" value="C:cytoplasm"/>
    <property type="evidence" value="ECO:0007669"/>
    <property type="project" value="UniProtKB-SubCell"/>
</dbReference>
<dbReference type="GO" id="GO:0005634">
    <property type="term" value="C:nucleus"/>
    <property type="evidence" value="ECO:0007669"/>
    <property type="project" value="UniProtKB-SubCell"/>
</dbReference>
<dbReference type="GO" id="GO:0010308">
    <property type="term" value="F:acireductone dioxygenase (Ni2+-requiring) activity"/>
    <property type="evidence" value="ECO:0007669"/>
    <property type="project" value="UniProtKB-UniRule"/>
</dbReference>
<dbReference type="GO" id="GO:0010309">
    <property type="term" value="F:acireductone dioxygenase [iron(II)-requiring] activity"/>
    <property type="evidence" value="ECO:0007669"/>
    <property type="project" value="UniProtKB-UniRule"/>
</dbReference>
<dbReference type="GO" id="GO:0005506">
    <property type="term" value="F:iron ion binding"/>
    <property type="evidence" value="ECO:0007669"/>
    <property type="project" value="UniProtKB-UniRule"/>
</dbReference>
<dbReference type="GO" id="GO:0016151">
    <property type="term" value="F:nickel cation binding"/>
    <property type="evidence" value="ECO:0007669"/>
    <property type="project" value="UniProtKB-UniRule"/>
</dbReference>
<dbReference type="GO" id="GO:0019509">
    <property type="term" value="P:L-methionine salvage from methylthioadenosine"/>
    <property type="evidence" value="ECO:0007669"/>
    <property type="project" value="UniProtKB-UniRule"/>
</dbReference>
<dbReference type="CDD" id="cd02232">
    <property type="entry name" value="cupin_ARD"/>
    <property type="match status" value="1"/>
</dbReference>
<dbReference type="FunFam" id="2.60.120.10:FF:000099">
    <property type="entry name" value="1,2-dihydroxy-3-keto-5-methylthiopentene dioxygenase"/>
    <property type="match status" value="1"/>
</dbReference>
<dbReference type="Gene3D" id="3.40.30.10">
    <property type="entry name" value="Glutaredoxin"/>
    <property type="match status" value="1"/>
</dbReference>
<dbReference type="Gene3D" id="2.60.120.10">
    <property type="entry name" value="Jelly Rolls"/>
    <property type="match status" value="1"/>
</dbReference>
<dbReference type="HAMAP" id="MF_03154">
    <property type="entry name" value="Salvage_MtnD_euk"/>
    <property type="match status" value="1"/>
</dbReference>
<dbReference type="InterPro" id="IPR004313">
    <property type="entry name" value="ARD"/>
</dbReference>
<dbReference type="InterPro" id="IPR027496">
    <property type="entry name" value="ARD_euk"/>
</dbReference>
<dbReference type="InterPro" id="IPR014710">
    <property type="entry name" value="RmlC-like_jellyroll"/>
</dbReference>
<dbReference type="InterPro" id="IPR011051">
    <property type="entry name" value="RmlC_Cupin_sf"/>
</dbReference>
<dbReference type="InterPro" id="IPR036249">
    <property type="entry name" value="Thioredoxin-like_sf"/>
</dbReference>
<dbReference type="InterPro" id="IPR010357">
    <property type="entry name" value="TXNDC17_dom"/>
</dbReference>
<dbReference type="PANTHER" id="PTHR23418">
    <property type="entry name" value="ACIREDUCTONE DIOXYGENASE"/>
    <property type="match status" value="1"/>
</dbReference>
<dbReference type="PANTHER" id="PTHR23418:SF0">
    <property type="entry name" value="ACIREDUCTONE DIOXYGENASE"/>
    <property type="match status" value="1"/>
</dbReference>
<dbReference type="Pfam" id="PF03079">
    <property type="entry name" value="ARD"/>
    <property type="match status" value="1"/>
</dbReference>
<dbReference type="Pfam" id="PF06110">
    <property type="entry name" value="TXD17-like_Trx"/>
    <property type="match status" value="1"/>
</dbReference>
<dbReference type="SUPFAM" id="SSF51182">
    <property type="entry name" value="RmlC-like cupins"/>
    <property type="match status" value="1"/>
</dbReference>
<dbReference type="SUPFAM" id="SSF52833">
    <property type="entry name" value="Thioredoxin-like"/>
    <property type="match status" value="1"/>
</dbReference>
<accession>E9AIE8</accession>
<feature type="chain" id="PRO_0000414349" description="Acireductone dioxygenase">
    <location>
        <begin position="1"/>
        <end position="344"/>
    </location>
</feature>
<feature type="binding site" evidence="1">
    <location>
        <position position="92"/>
    </location>
    <ligand>
        <name>Fe(2+)</name>
        <dbReference type="ChEBI" id="CHEBI:29033"/>
        <note>for iron-dependent acireductone dioxygenase activity</note>
    </ligand>
</feature>
<feature type="binding site" evidence="1">
    <location>
        <position position="92"/>
    </location>
    <ligand>
        <name>Ni(2+)</name>
        <dbReference type="ChEBI" id="CHEBI:49786"/>
        <note>for nickel-dependent acireductone dioxygenase activity</note>
    </ligand>
</feature>
<feature type="binding site" evidence="1">
    <location>
        <position position="94"/>
    </location>
    <ligand>
        <name>Fe(2+)</name>
        <dbReference type="ChEBI" id="CHEBI:29033"/>
        <note>for iron-dependent acireductone dioxygenase activity</note>
    </ligand>
</feature>
<feature type="binding site" evidence="1">
    <location>
        <position position="94"/>
    </location>
    <ligand>
        <name>Ni(2+)</name>
        <dbReference type="ChEBI" id="CHEBI:49786"/>
        <note>for nickel-dependent acireductone dioxygenase activity</note>
    </ligand>
</feature>
<feature type="binding site" evidence="1">
    <location>
        <position position="98"/>
    </location>
    <ligand>
        <name>Fe(2+)</name>
        <dbReference type="ChEBI" id="CHEBI:29033"/>
        <note>for iron-dependent acireductone dioxygenase activity</note>
    </ligand>
</feature>
<feature type="binding site" evidence="1">
    <location>
        <position position="98"/>
    </location>
    <ligand>
        <name>Ni(2+)</name>
        <dbReference type="ChEBI" id="CHEBI:49786"/>
        <note>for nickel-dependent acireductone dioxygenase activity</note>
    </ligand>
</feature>
<feature type="binding site" evidence="1">
    <location>
        <position position="137"/>
    </location>
    <ligand>
        <name>Fe(2+)</name>
        <dbReference type="ChEBI" id="CHEBI:29033"/>
        <note>for iron-dependent acireductone dioxygenase activity</note>
    </ligand>
</feature>
<feature type="binding site" evidence="1">
    <location>
        <position position="137"/>
    </location>
    <ligand>
        <name>Ni(2+)</name>
        <dbReference type="ChEBI" id="CHEBI:49786"/>
        <note>for nickel-dependent acireductone dioxygenase activity</note>
    </ligand>
</feature>
<sequence>MTECWYIPEEVADRREENRLSPNVPGSYEALSEARVFFRHFDPKEVSDDIEGFIQPLLKKLNYHSYDVVNLSPATLGDEKFEALAEQHFMEHTHEDDEVRLILEGQGYFDVRDANDKWIRLLSKPGDCIVLPAGMYHRFTTDHSKCIKTLRIFKEAPRWIALNRGPETEEKPARKEYLARLHAPAETAVGAANSHTIFSLHYPLKLDAELTVITKRLLEQHSKQPLALMIFLTGSTDPTTGASWCPDCIPAKPQVAQRFAELQGKYGEERAIFLQLPVERAGYLGNPEYPYRKHPTLQLASVPTLLVLTPTKDAKEKGDVQWYDRLEVKMRTCDIDKADVLSLE</sequence>
<comment type="function">
    <text evidence="1">Catalyzes 2 different reactions between oxygen and the acireductone 1,2-dihydroxy-3-keto-5-methylthiopentene (DHK-MTPene) depending upon the metal bound in the active site. Fe-containing acireductone dioxygenase (Fe-ARD) produces formate and 2-keto-4-methylthiobutyrate (KMTB), the alpha-ketoacid precursor of methionine in the methionine recycle pathway. Ni-containing acireductone dioxygenase (Ni-ARD) produces methylthiopropionate, carbon monoxide and formate, and does not lie on the methionine recycle pathway.</text>
</comment>
<comment type="catalytic activity">
    <reaction evidence="1">
        <text>1,2-dihydroxy-5-(methylsulfanyl)pent-1-en-3-one + O2 = 4-methylsulfanyl-2-oxobutanoate + formate + 2 H(+)</text>
        <dbReference type="Rhea" id="RHEA:24504"/>
        <dbReference type="ChEBI" id="CHEBI:15378"/>
        <dbReference type="ChEBI" id="CHEBI:15379"/>
        <dbReference type="ChEBI" id="CHEBI:15740"/>
        <dbReference type="ChEBI" id="CHEBI:16723"/>
        <dbReference type="ChEBI" id="CHEBI:49252"/>
        <dbReference type="EC" id="1.13.11.54"/>
    </reaction>
</comment>
<comment type="catalytic activity">
    <reaction evidence="1">
        <text>1,2-dihydroxy-5-(methylsulfanyl)pent-1-en-3-one + O2 = 3-(methylsulfanyl)propanoate + CO + formate + 2 H(+)</text>
        <dbReference type="Rhea" id="RHEA:14161"/>
        <dbReference type="ChEBI" id="CHEBI:15378"/>
        <dbReference type="ChEBI" id="CHEBI:15379"/>
        <dbReference type="ChEBI" id="CHEBI:15740"/>
        <dbReference type="ChEBI" id="CHEBI:17245"/>
        <dbReference type="ChEBI" id="CHEBI:49016"/>
        <dbReference type="ChEBI" id="CHEBI:49252"/>
        <dbReference type="EC" id="1.13.11.53"/>
    </reaction>
</comment>
<comment type="cofactor">
    <cofactor evidence="1">
        <name>Fe(2+)</name>
        <dbReference type="ChEBI" id="CHEBI:29033"/>
    </cofactor>
    <cofactor evidence="1">
        <name>Ni(2+)</name>
        <dbReference type="ChEBI" id="CHEBI:49786"/>
    </cofactor>
    <text evidence="1">Binds either 1 Fe or Ni cation per monomer. Iron-binding promotes an acireductone dioxygenase reaction producing 2-keto-4-methylthiobutyrate, while nickel-binding promotes an acireductone dioxygenase reaction producing 3-(methylsulfanyl)propanoate.</text>
</comment>
<comment type="pathway">
    <text evidence="1">Amino-acid biosynthesis; L-methionine biosynthesis via salvage pathway; L-methionine from S-methyl-5-thio-alpha-D-ribose 1-phosphate: step 5/6.</text>
</comment>
<comment type="subcellular location">
    <subcellularLocation>
        <location evidence="1">Cytoplasm</location>
    </subcellularLocation>
    <subcellularLocation>
        <location evidence="1">Nucleus</location>
    </subcellularLocation>
</comment>
<comment type="similarity">
    <text evidence="1">Belongs to the acireductone dioxygenase (ARD) family.</text>
</comment>
<proteinExistence type="inferred from homology"/>
<protein>
    <recommendedName>
        <fullName evidence="1">Acireductone dioxygenase</fullName>
    </recommendedName>
    <alternativeName>
        <fullName evidence="1">Acireductone dioxygenase (Fe(2+)-requiring)</fullName>
        <shortName evidence="1">ARD'</shortName>
        <shortName evidence="1">Fe-ARD</shortName>
        <ecNumber evidence="1">1.13.11.54</ecNumber>
    </alternativeName>
    <alternativeName>
        <fullName evidence="1">Acireductone dioxygenase (Ni(2+)-requiring)</fullName>
        <shortName evidence="1">ARD</shortName>
        <shortName evidence="1">Ni-ARD</shortName>
        <ecNumber evidence="1">1.13.11.53</ecNumber>
    </alternativeName>
</protein>
<organism>
    <name type="scientific">Leishmania braziliensis</name>
    <dbReference type="NCBI Taxonomy" id="5660"/>
    <lineage>
        <taxon>Eukaryota</taxon>
        <taxon>Discoba</taxon>
        <taxon>Euglenozoa</taxon>
        <taxon>Kinetoplastea</taxon>
        <taxon>Metakinetoplastina</taxon>
        <taxon>Trypanosomatida</taxon>
        <taxon>Trypanosomatidae</taxon>
        <taxon>Leishmaniinae</taxon>
        <taxon>Leishmania</taxon>
        <taxon>Leishmania braziliensis species complex</taxon>
    </lineage>
</organism>
<gene>
    <name type="ORF">LBRM_20_5150</name>
</gene>
<reference key="1">
    <citation type="journal article" date="2007" name="Nat. Genet.">
        <title>Comparative genomic analysis of three Leishmania species that cause diverse human disease.</title>
        <authorList>
            <person name="Peacock C.S."/>
            <person name="Seeger K."/>
            <person name="Harris D."/>
            <person name="Murphy L."/>
            <person name="Ruiz J.C."/>
            <person name="Quail M.A."/>
            <person name="Peters N."/>
            <person name="Adlem E."/>
            <person name="Tivey A."/>
            <person name="Aslett M."/>
            <person name="Kerhornou A."/>
            <person name="Ivens A."/>
            <person name="Fraser A."/>
            <person name="Rajandream M.-A."/>
            <person name="Carver T."/>
            <person name="Norbertczak H."/>
            <person name="Chillingworth T."/>
            <person name="Hance Z."/>
            <person name="Jagels K."/>
            <person name="Moule S."/>
            <person name="Ormond D."/>
            <person name="Rutter S."/>
            <person name="Sqaures R."/>
            <person name="Whitehead S."/>
            <person name="Rabbinowitsch E."/>
            <person name="Arrowsmith C."/>
            <person name="White B."/>
            <person name="Thurston S."/>
            <person name="Bringaud F."/>
            <person name="Baldauf S.L."/>
            <person name="Faulconbridge A."/>
            <person name="Jeffares D."/>
            <person name="Depledge D.P."/>
            <person name="Oyola S.O."/>
            <person name="Hilley J.D."/>
            <person name="Brito L.O."/>
            <person name="Tosi L.R.O."/>
            <person name="Barrell B."/>
            <person name="Cruz A.K."/>
            <person name="Mottram J.C."/>
            <person name="Smith D.F."/>
            <person name="Berriman M."/>
        </authorList>
    </citation>
    <scope>NUCLEOTIDE SEQUENCE [LARGE SCALE GENOMIC DNA]</scope>
    <source>
        <strain>MHOM/BR/75/M2904</strain>
    </source>
</reference>
<keyword id="KW-0028">Amino-acid biosynthesis</keyword>
<keyword id="KW-0963">Cytoplasm</keyword>
<keyword id="KW-0223">Dioxygenase</keyword>
<keyword id="KW-0408">Iron</keyword>
<keyword id="KW-0479">Metal-binding</keyword>
<keyword id="KW-0486">Methionine biosynthesis</keyword>
<keyword id="KW-0533">Nickel</keyword>
<keyword id="KW-0539">Nucleus</keyword>
<keyword id="KW-0560">Oxidoreductase</keyword>
<evidence type="ECO:0000255" key="1">
    <source>
        <dbReference type="HAMAP-Rule" id="MF_03154"/>
    </source>
</evidence>